<accession>P54572</accession>
<gene>
    <name evidence="7" type="primary">mleA</name>
    <name type="synonym">yqkJ</name>
    <name type="ordered locus">BSU23550</name>
</gene>
<comment type="function">
    <text evidence="4 5">Catalyzes the decarboxylation of malate to pyruvate. Is specific for NAD, cannot use NADP. Can also catalyze the decarboxylation of oxaloacetate (PubMed:16788182). Involved in keeping the ATP levels high (PubMed:23136871).</text>
</comment>
<comment type="catalytic activity">
    <reaction evidence="4">
        <text>(S)-malate + NAD(+) = pyruvate + CO2 + NADH</text>
        <dbReference type="Rhea" id="RHEA:12653"/>
        <dbReference type="ChEBI" id="CHEBI:15361"/>
        <dbReference type="ChEBI" id="CHEBI:15589"/>
        <dbReference type="ChEBI" id="CHEBI:16526"/>
        <dbReference type="ChEBI" id="CHEBI:57540"/>
        <dbReference type="ChEBI" id="CHEBI:57945"/>
        <dbReference type="EC" id="1.1.1.38"/>
    </reaction>
</comment>
<comment type="catalytic activity">
    <reaction evidence="4">
        <text>oxaloacetate + H(+) = pyruvate + CO2</text>
        <dbReference type="Rhea" id="RHEA:15641"/>
        <dbReference type="ChEBI" id="CHEBI:15361"/>
        <dbReference type="ChEBI" id="CHEBI:15378"/>
        <dbReference type="ChEBI" id="CHEBI:16452"/>
        <dbReference type="ChEBI" id="CHEBI:16526"/>
        <dbReference type="EC" id="1.1.1.38"/>
    </reaction>
</comment>
<comment type="cofactor">
    <cofactor evidence="2">
        <name>Mg(2+)</name>
        <dbReference type="ChEBI" id="CHEBI:18420"/>
    </cofactor>
    <cofactor evidence="2">
        <name>Mn(2+)</name>
        <dbReference type="ChEBI" id="CHEBI:29035"/>
    </cofactor>
    <text evidence="2">Divalent metal cations.</text>
</comment>
<comment type="biophysicochemical properties">
    <kinetics>
        <KM evidence="4">1.56 mM for malate</KM>
        <KM evidence="4">1 mM for NAD</KM>
    </kinetics>
</comment>
<comment type="induction">
    <text evidence="4">Weakly expressed in glucose or malate minimal medium.</text>
</comment>
<comment type="disruption phenotype">
    <text evidence="4 5 6">Mutant can use either a gluconeogenic carbon source or glucose as efficiently as the wild-type strain (PubMed:16788182). The ATP concentrations in the mutant grown in minimal medium with glucose are similar to the wild-type level. ATP concentrations slightly decrease in malate minimal medium. The mleA-maeA-malS triple mutant shows a decrease in ATP concentrations by about 20% and a moderate growth defect (PubMed:23136871). NADPH overproduction is roughly halved in the deletion mutant (PubMed:33824210).</text>
</comment>
<comment type="similarity">
    <text evidence="8">Belongs to the malic enzymes family.</text>
</comment>
<protein>
    <recommendedName>
        <fullName evidence="8">NAD-dependent malic enzyme 1</fullName>
        <shortName>NAD-ME 1</shortName>
        <ecNumber evidence="4">1.1.1.38</ecNumber>
    </recommendedName>
    <alternativeName>
        <fullName evidence="8">Malate dehydrogenase MleA</fullName>
    </alternativeName>
</protein>
<feature type="chain" id="PRO_0000160208" description="NAD-dependent malic enzyme 1">
    <location>
        <begin position="1"/>
        <end position="439"/>
    </location>
</feature>
<feature type="domain" description="ACT" evidence="3">
    <location>
        <begin position="9"/>
        <end position="84"/>
    </location>
</feature>
<feature type="active site" description="Proton donor" evidence="1">
    <location>
        <position position="112"/>
    </location>
</feature>
<feature type="active site" description="Proton acceptor" evidence="1">
    <location>
        <position position="167"/>
    </location>
</feature>
<feature type="binding site" evidence="1">
    <location>
        <position position="209"/>
    </location>
    <ligand>
        <name>a divalent metal cation</name>
        <dbReference type="ChEBI" id="CHEBI:60240"/>
    </ligand>
</feature>
<feature type="binding site" evidence="1">
    <location>
        <position position="210"/>
    </location>
    <ligand>
        <name>a divalent metal cation</name>
        <dbReference type="ChEBI" id="CHEBI:60240"/>
    </ligand>
</feature>
<feature type="binding site" evidence="1">
    <location>
        <position position="235"/>
    </location>
    <ligand>
        <name>a divalent metal cation</name>
        <dbReference type="ChEBI" id="CHEBI:60240"/>
    </ligand>
</feature>
<feature type="binding site" evidence="1">
    <location>
        <begin position="268"/>
        <end position="271"/>
    </location>
    <ligand>
        <name>NAD(+)</name>
        <dbReference type="ChEBI" id="CHEBI:57540"/>
    </ligand>
</feature>
<feature type="binding site" evidence="1">
    <location>
        <position position="347"/>
    </location>
    <ligand>
        <name>NAD(+)</name>
        <dbReference type="ChEBI" id="CHEBI:57540"/>
    </ligand>
</feature>
<feature type="binding site" evidence="1">
    <location>
        <position position="373"/>
    </location>
    <ligand>
        <name>NAD(+)</name>
        <dbReference type="ChEBI" id="CHEBI:57540"/>
    </ligand>
</feature>
<reference key="1">
    <citation type="journal article" date="1996" name="Microbiology">
        <title>Systematic sequencing of the 283 kb 210 degrees-232 degrees region of the Bacillus subtilis genome containing the skin element and many sporulation genes.</title>
        <authorList>
            <person name="Mizuno M."/>
            <person name="Masuda S."/>
            <person name="Takemaru K."/>
            <person name="Hosono S."/>
            <person name="Sato T."/>
            <person name="Takeuchi M."/>
            <person name="Kobayashi Y."/>
        </authorList>
    </citation>
    <scope>NUCLEOTIDE SEQUENCE [GENOMIC DNA]</scope>
    <source>
        <strain>168 / JH642</strain>
    </source>
</reference>
<reference key="2">
    <citation type="journal article" date="1997" name="Nature">
        <title>The complete genome sequence of the Gram-positive bacterium Bacillus subtilis.</title>
        <authorList>
            <person name="Kunst F."/>
            <person name="Ogasawara N."/>
            <person name="Moszer I."/>
            <person name="Albertini A.M."/>
            <person name="Alloni G."/>
            <person name="Azevedo V."/>
            <person name="Bertero M.G."/>
            <person name="Bessieres P."/>
            <person name="Bolotin A."/>
            <person name="Borchert S."/>
            <person name="Borriss R."/>
            <person name="Boursier L."/>
            <person name="Brans A."/>
            <person name="Braun M."/>
            <person name="Brignell S.C."/>
            <person name="Bron S."/>
            <person name="Brouillet S."/>
            <person name="Bruschi C.V."/>
            <person name="Caldwell B."/>
            <person name="Capuano V."/>
            <person name="Carter N.M."/>
            <person name="Choi S.-K."/>
            <person name="Codani J.-J."/>
            <person name="Connerton I.F."/>
            <person name="Cummings N.J."/>
            <person name="Daniel R.A."/>
            <person name="Denizot F."/>
            <person name="Devine K.M."/>
            <person name="Duesterhoeft A."/>
            <person name="Ehrlich S.D."/>
            <person name="Emmerson P.T."/>
            <person name="Entian K.-D."/>
            <person name="Errington J."/>
            <person name="Fabret C."/>
            <person name="Ferrari E."/>
            <person name="Foulger D."/>
            <person name="Fritz C."/>
            <person name="Fujita M."/>
            <person name="Fujita Y."/>
            <person name="Fuma S."/>
            <person name="Galizzi A."/>
            <person name="Galleron N."/>
            <person name="Ghim S.-Y."/>
            <person name="Glaser P."/>
            <person name="Goffeau A."/>
            <person name="Golightly E.J."/>
            <person name="Grandi G."/>
            <person name="Guiseppi G."/>
            <person name="Guy B.J."/>
            <person name="Haga K."/>
            <person name="Haiech J."/>
            <person name="Harwood C.R."/>
            <person name="Henaut A."/>
            <person name="Hilbert H."/>
            <person name="Holsappel S."/>
            <person name="Hosono S."/>
            <person name="Hullo M.-F."/>
            <person name="Itaya M."/>
            <person name="Jones L.-M."/>
            <person name="Joris B."/>
            <person name="Karamata D."/>
            <person name="Kasahara Y."/>
            <person name="Klaerr-Blanchard M."/>
            <person name="Klein C."/>
            <person name="Kobayashi Y."/>
            <person name="Koetter P."/>
            <person name="Koningstein G."/>
            <person name="Krogh S."/>
            <person name="Kumano M."/>
            <person name="Kurita K."/>
            <person name="Lapidus A."/>
            <person name="Lardinois S."/>
            <person name="Lauber J."/>
            <person name="Lazarevic V."/>
            <person name="Lee S.-M."/>
            <person name="Levine A."/>
            <person name="Liu H."/>
            <person name="Masuda S."/>
            <person name="Mauel C."/>
            <person name="Medigue C."/>
            <person name="Medina N."/>
            <person name="Mellado R.P."/>
            <person name="Mizuno M."/>
            <person name="Moestl D."/>
            <person name="Nakai S."/>
            <person name="Noback M."/>
            <person name="Noone D."/>
            <person name="O'Reilly M."/>
            <person name="Ogawa K."/>
            <person name="Ogiwara A."/>
            <person name="Oudega B."/>
            <person name="Park S.-H."/>
            <person name="Parro V."/>
            <person name="Pohl T.M."/>
            <person name="Portetelle D."/>
            <person name="Porwollik S."/>
            <person name="Prescott A.M."/>
            <person name="Presecan E."/>
            <person name="Pujic P."/>
            <person name="Purnelle B."/>
            <person name="Rapoport G."/>
            <person name="Rey M."/>
            <person name="Reynolds S."/>
            <person name="Rieger M."/>
            <person name="Rivolta C."/>
            <person name="Rocha E."/>
            <person name="Roche B."/>
            <person name="Rose M."/>
            <person name="Sadaie Y."/>
            <person name="Sato T."/>
            <person name="Scanlan E."/>
            <person name="Schleich S."/>
            <person name="Schroeter R."/>
            <person name="Scoffone F."/>
            <person name="Sekiguchi J."/>
            <person name="Sekowska A."/>
            <person name="Seror S.J."/>
            <person name="Serror P."/>
            <person name="Shin B.-S."/>
            <person name="Soldo B."/>
            <person name="Sorokin A."/>
            <person name="Tacconi E."/>
            <person name="Takagi T."/>
            <person name="Takahashi H."/>
            <person name="Takemaru K."/>
            <person name="Takeuchi M."/>
            <person name="Tamakoshi A."/>
            <person name="Tanaka T."/>
            <person name="Terpstra P."/>
            <person name="Tognoni A."/>
            <person name="Tosato V."/>
            <person name="Uchiyama S."/>
            <person name="Vandenbol M."/>
            <person name="Vannier F."/>
            <person name="Vassarotti A."/>
            <person name="Viari A."/>
            <person name="Wambutt R."/>
            <person name="Wedler E."/>
            <person name="Wedler H."/>
            <person name="Weitzenegger T."/>
            <person name="Winters P."/>
            <person name="Wipat A."/>
            <person name="Yamamoto H."/>
            <person name="Yamane K."/>
            <person name="Yasumoto K."/>
            <person name="Yata K."/>
            <person name="Yoshida K."/>
            <person name="Yoshikawa H.-F."/>
            <person name="Zumstein E."/>
            <person name="Yoshikawa H."/>
            <person name="Danchin A."/>
        </authorList>
    </citation>
    <scope>NUCLEOTIDE SEQUENCE [LARGE SCALE GENOMIC DNA]</scope>
    <source>
        <strain>168</strain>
    </source>
</reference>
<reference key="3">
    <citation type="journal article" date="1993" name="J. Bacteriol.">
        <title>Physical and functional characterization of the Bacillus subtilis spoIIM gene.</title>
        <authorList>
            <person name="Smith K."/>
            <person name="Bayer M.E."/>
            <person name="Youngman P."/>
        </authorList>
    </citation>
    <scope>NUCLEOTIDE SEQUENCE [GENOMIC DNA] OF 432-439</scope>
</reference>
<reference key="4">
    <citation type="journal article" date="2000" name="J. Biol. Chem.">
        <title>Bacillus subtilis YqkI is a novel malic/Na+-lactate antiporter that enhances growth on malate at low protonmotive force.</title>
        <authorList>
            <person name="Wei Y."/>
            <person name="Guffanti A.A."/>
            <person name="Ito M."/>
            <person name="Krulwich T.A."/>
        </authorList>
    </citation>
    <scope>DISCUSSION OF FUNCTION</scope>
</reference>
<reference key="5">
    <citation type="journal article" date="2006" name="J. Bacteriol.">
        <title>YtsJ has the major physiological role of the four paralogous malic enzyme isoforms in Bacillus subtilis.</title>
        <authorList>
            <person name="Lerondel G."/>
            <person name="Doan T."/>
            <person name="Zamboni N."/>
            <person name="Sauer U."/>
            <person name="Aymerich S."/>
        </authorList>
    </citation>
    <scope>FUNCTION</scope>
    <scope>CATALYTIC ACTIVITY</scope>
    <scope>BIOPHYSICOCHEMICAL PROPERTIES</scope>
    <scope>INDUCTION</scope>
    <scope>DISRUPTION PHENOTYPE</scope>
    <source>
        <strain>168</strain>
    </source>
</reference>
<reference key="6">
    <citation type="journal article" date="2013" name="FEMS Microbiol. Lett.">
        <title>Malate metabolism in Bacillus subtilis: distinct roles for three classes of malate-oxidizing enzymes.</title>
        <authorList>
            <person name="Meyer F.M."/>
            <person name="Stuelke J."/>
        </authorList>
    </citation>
    <scope>FUNCTION</scope>
    <scope>DISRUPTION PHENOTYPE</scope>
    <source>
        <strain>168</strain>
    </source>
</reference>
<reference key="7">
    <citation type="journal article" date="2021" name="MBio">
        <title>Bifunctional malic/malolactic enzyme provides a novel mechanism for NADPH-balancing in Bacillus subtilis.</title>
        <authorList>
            <person name="Hoerl M."/>
            <person name="Fuhrer T."/>
            <person name="Zamboni N."/>
        </authorList>
    </citation>
    <scope>DISRUPTION PHENOTYPE</scope>
</reference>
<keyword id="KW-0460">Magnesium</keyword>
<keyword id="KW-0464">Manganese</keyword>
<keyword id="KW-0479">Metal-binding</keyword>
<keyword id="KW-0520">NAD</keyword>
<keyword id="KW-0560">Oxidoreductase</keyword>
<keyword id="KW-1185">Reference proteome</keyword>
<sequence>MIAKHMIRTLMIETPSVPGNLGRVATAIGLLGGDIGEVETVKVGPNYTMRNITVQVENEEQLQEVIAAVQALGEGIRLHTVSDEVLSAHEGGKIQMKSKMPIRSLAELGRVYTPGVADVCRLIEKEPEKASIYTTISNSVAIVTDGTAILGLGNIGSVAGMPVMEGKAALFDQLAGISGIPILLDTSDPEEIIKTVKHISPGFSGILLEDIGSPHCFEIEDRLKEELNIPVMHDDQHGTAVVTLAAAISACRSAGVDLKEAKVGQIGLGAAGVAICRMFMAYGVNAVYGTDKSESAMNRLEQYGGQAVSSIEELMETCDIVIATTGVPGLIKPAFVRSGQVILALSNPKPEIEPEAALQAGAAYAADGRSVNNVLGFPGIFRGALNAKSTEINHDMLVAAAEAIAACTKQGDVVPQPLDSKVHHAVAAAVEHAALTAVK</sequence>
<evidence type="ECO:0000250" key="1">
    <source>
        <dbReference type="UniProtKB" id="P40927"/>
    </source>
</evidence>
<evidence type="ECO:0000250" key="2">
    <source>
        <dbReference type="UniProtKB" id="P76558"/>
    </source>
</evidence>
<evidence type="ECO:0000255" key="3">
    <source>
        <dbReference type="PROSITE-ProRule" id="PRU01007"/>
    </source>
</evidence>
<evidence type="ECO:0000269" key="4">
    <source>
    </source>
</evidence>
<evidence type="ECO:0000269" key="5">
    <source>
    </source>
</evidence>
<evidence type="ECO:0000269" key="6">
    <source>
    </source>
</evidence>
<evidence type="ECO:0000303" key="7">
    <source>
    </source>
</evidence>
<evidence type="ECO:0000305" key="8"/>
<name>MAO1_BACSU</name>
<dbReference type="EC" id="1.1.1.38" evidence="4"/>
<dbReference type="EMBL" id="D84432">
    <property type="protein sequence ID" value="BAA12645.1"/>
    <property type="molecule type" value="Genomic_DNA"/>
</dbReference>
<dbReference type="EMBL" id="AL009126">
    <property type="protein sequence ID" value="CAB14287.1"/>
    <property type="molecule type" value="Genomic_DNA"/>
</dbReference>
<dbReference type="EMBL" id="L06664">
    <property type="status" value="NOT_ANNOTATED_CDS"/>
    <property type="molecule type" value="Genomic_DNA"/>
</dbReference>
<dbReference type="PIR" id="C69967">
    <property type="entry name" value="C69967"/>
</dbReference>
<dbReference type="RefSeq" id="NP_390236.1">
    <property type="nucleotide sequence ID" value="NC_000964.3"/>
</dbReference>
<dbReference type="RefSeq" id="WP_004398731.1">
    <property type="nucleotide sequence ID" value="NZ_OZ025638.1"/>
</dbReference>
<dbReference type="SMR" id="P54572"/>
<dbReference type="FunCoup" id="P54572">
    <property type="interactions" value="301"/>
</dbReference>
<dbReference type="STRING" id="224308.BSU23550"/>
<dbReference type="jPOST" id="P54572"/>
<dbReference type="PaxDb" id="224308-BSU23550"/>
<dbReference type="EnsemblBacteria" id="CAB14287">
    <property type="protein sequence ID" value="CAB14287"/>
    <property type="gene ID" value="BSU_23550"/>
</dbReference>
<dbReference type="GeneID" id="938725"/>
<dbReference type="KEGG" id="bsu:BSU23550"/>
<dbReference type="PATRIC" id="fig|224308.179.peg.2567"/>
<dbReference type="eggNOG" id="COG0281">
    <property type="taxonomic scope" value="Bacteria"/>
</dbReference>
<dbReference type="InParanoid" id="P54572"/>
<dbReference type="OrthoDB" id="9805787at2"/>
<dbReference type="PhylomeDB" id="P54572"/>
<dbReference type="BioCyc" id="BSUB:BSU23550-MONOMER"/>
<dbReference type="Proteomes" id="UP000001570">
    <property type="component" value="Chromosome"/>
</dbReference>
<dbReference type="GO" id="GO:0004471">
    <property type="term" value="F:malate dehydrogenase (decarboxylating) (NAD+) activity"/>
    <property type="evidence" value="ECO:0007669"/>
    <property type="project" value="RHEA"/>
</dbReference>
<dbReference type="GO" id="GO:0046872">
    <property type="term" value="F:metal ion binding"/>
    <property type="evidence" value="ECO:0007669"/>
    <property type="project" value="UniProtKB-KW"/>
</dbReference>
<dbReference type="GO" id="GO:0051287">
    <property type="term" value="F:NAD binding"/>
    <property type="evidence" value="ECO:0007669"/>
    <property type="project" value="InterPro"/>
</dbReference>
<dbReference type="GO" id="GO:0008948">
    <property type="term" value="F:oxaloacetate decarboxylase activity"/>
    <property type="evidence" value="ECO:0007669"/>
    <property type="project" value="RHEA"/>
</dbReference>
<dbReference type="Gene3D" id="3.40.50.10380">
    <property type="entry name" value="Malic enzyme, N-terminal domain"/>
    <property type="match status" value="1"/>
</dbReference>
<dbReference type="Gene3D" id="3.40.50.720">
    <property type="entry name" value="NAD(P)-binding Rossmann-like Domain"/>
    <property type="match status" value="1"/>
</dbReference>
<dbReference type="InterPro" id="IPR002912">
    <property type="entry name" value="ACT_dom"/>
</dbReference>
<dbReference type="InterPro" id="IPR046346">
    <property type="entry name" value="Aminoacid_DH-like_N_sf"/>
</dbReference>
<dbReference type="InterPro" id="IPR006140">
    <property type="entry name" value="D-isomer_DH_NAD-bd"/>
</dbReference>
<dbReference type="InterPro" id="IPR051674">
    <property type="entry name" value="Malate_Decarboxylase"/>
</dbReference>
<dbReference type="InterPro" id="IPR015884">
    <property type="entry name" value="Malic_enzyme_CS"/>
</dbReference>
<dbReference type="InterPro" id="IPR012301">
    <property type="entry name" value="Malic_N_dom"/>
</dbReference>
<dbReference type="InterPro" id="IPR037062">
    <property type="entry name" value="Malic_N_dom_sf"/>
</dbReference>
<dbReference type="InterPro" id="IPR012302">
    <property type="entry name" value="Malic_NAD-bd"/>
</dbReference>
<dbReference type="InterPro" id="IPR001891">
    <property type="entry name" value="Malic_OxRdtase"/>
</dbReference>
<dbReference type="InterPro" id="IPR036291">
    <property type="entry name" value="NAD(P)-bd_dom_sf"/>
</dbReference>
<dbReference type="PANTHER" id="PTHR43237">
    <property type="entry name" value="NADP-DEPENDENT MALIC ENZYME"/>
    <property type="match status" value="1"/>
</dbReference>
<dbReference type="PANTHER" id="PTHR43237:SF4">
    <property type="entry name" value="NADP-DEPENDENT MALIC ENZYME"/>
    <property type="match status" value="1"/>
</dbReference>
<dbReference type="Pfam" id="PF02826">
    <property type="entry name" value="2-Hacid_dh_C"/>
    <property type="match status" value="1"/>
</dbReference>
<dbReference type="Pfam" id="PF00390">
    <property type="entry name" value="malic"/>
    <property type="match status" value="1"/>
</dbReference>
<dbReference type="Pfam" id="PF03949">
    <property type="entry name" value="Malic_M"/>
    <property type="match status" value="1"/>
</dbReference>
<dbReference type="PIRSF" id="PIRSF000106">
    <property type="entry name" value="ME"/>
    <property type="match status" value="1"/>
</dbReference>
<dbReference type="SMART" id="SM01274">
    <property type="entry name" value="malic"/>
    <property type="match status" value="1"/>
</dbReference>
<dbReference type="SMART" id="SM00919">
    <property type="entry name" value="Malic_M"/>
    <property type="match status" value="1"/>
</dbReference>
<dbReference type="SUPFAM" id="SSF53223">
    <property type="entry name" value="Aminoacid dehydrogenase-like, N-terminal domain"/>
    <property type="match status" value="1"/>
</dbReference>
<dbReference type="SUPFAM" id="SSF51735">
    <property type="entry name" value="NAD(P)-binding Rossmann-fold domains"/>
    <property type="match status" value="1"/>
</dbReference>
<dbReference type="PROSITE" id="PS51671">
    <property type="entry name" value="ACT"/>
    <property type="match status" value="1"/>
</dbReference>
<dbReference type="PROSITE" id="PS00331">
    <property type="entry name" value="MALIC_ENZYMES"/>
    <property type="match status" value="1"/>
</dbReference>
<proteinExistence type="evidence at protein level"/>
<organism>
    <name type="scientific">Bacillus subtilis (strain 168)</name>
    <dbReference type="NCBI Taxonomy" id="224308"/>
    <lineage>
        <taxon>Bacteria</taxon>
        <taxon>Bacillati</taxon>
        <taxon>Bacillota</taxon>
        <taxon>Bacilli</taxon>
        <taxon>Bacillales</taxon>
        <taxon>Bacillaceae</taxon>
        <taxon>Bacillus</taxon>
    </lineage>
</organism>